<feature type="chain" id="PRO_0000445737" description="Peptidyl-prolyl cis-trans isomerase A-like 4H">
    <location>
        <begin position="1"/>
        <end position="164"/>
    </location>
</feature>
<feature type="domain" description="PPIase cyclophilin-type" evidence="2">
    <location>
        <begin position="7"/>
        <end position="163"/>
    </location>
</feature>
<feature type="glycosylation site" description="N-linked (GlcNAc...) asparagine" evidence="3">
    <location>
        <position position="71"/>
    </location>
</feature>
<feature type="glycosylation site" description="N-linked (GlcNAc...) asparagine" evidence="3">
    <location>
        <position position="108"/>
    </location>
</feature>
<sequence length="164" mass="18208">MVNSVVFFDITVDGKPLGRISIKLFADKIPKTAENFRALSTGEKGFRYKGSCFHRIIPGFMCQGGDFTRPNGTDDKSIYGEKFDDENLIRKHTGSGILSMVNAGPNTNGSQLFICTAKTEWLDGKHVAFGKVKERVNIVEAMEHFGYRNSKTSKKITIADCGQF</sequence>
<organism>
    <name type="scientific">Homo sapiens</name>
    <name type="common">Human</name>
    <dbReference type="NCBI Taxonomy" id="9606"/>
    <lineage>
        <taxon>Eukaryota</taxon>
        <taxon>Metazoa</taxon>
        <taxon>Chordata</taxon>
        <taxon>Craniata</taxon>
        <taxon>Vertebrata</taxon>
        <taxon>Euteleostomi</taxon>
        <taxon>Mammalia</taxon>
        <taxon>Eutheria</taxon>
        <taxon>Euarchontoglires</taxon>
        <taxon>Primates</taxon>
        <taxon>Haplorrhini</taxon>
        <taxon>Catarrhini</taxon>
        <taxon>Hominidae</taxon>
        <taxon>Homo</taxon>
    </lineage>
</organism>
<comment type="function">
    <text evidence="1">PPIases accelerate the folding of proteins. It catalyzes the cis-trans isomerization of proline imidic peptide bonds in oligopeptides.</text>
</comment>
<comment type="catalytic activity">
    <reaction evidence="1">
        <text>[protein]-peptidylproline (omega=180) = [protein]-peptidylproline (omega=0)</text>
        <dbReference type="Rhea" id="RHEA:16237"/>
        <dbReference type="Rhea" id="RHEA-COMP:10747"/>
        <dbReference type="Rhea" id="RHEA-COMP:10748"/>
        <dbReference type="ChEBI" id="CHEBI:83833"/>
        <dbReference type="ChEBI" id="CHEBI:83834"/>
        <dbReference type="EC" id="5.2.1.8"/>
    </reaction>
</comment>
<comment type="subcellular location">
    <subcellularLocation>
        <location evidence="1">Cytoplasm</location>
    </subcellularLocation>
</comment>
<comment type="miscellaneous">
    <text evidence="4">It is one of six related genes or pseudogenes found in a cluster, thought to result from gene duplication, on chromosome 1.</text>
</comment>
<comment type="similarity">
    <text evidence="4">Belongs to the cyclophilin-type PPIase family. PPIase A subfamily.</text>
</comment>
<proteinExistence type="evidence at protein level"/>
<accession>A0A075B767</accession>
<gene>
    <name evidence="5" type="primary">PPIAL4H</name>
</gene>
<name>PAL4H_HUMAN</name>
<keyword id="KW-0963">Cytoplasm</keyword>
<keyword id="KW-0325">Glycoprotein</keyword>
<keyword id="KW-0413">Isomerase</keyword>
<keyword id="KW-1267">Proteomics identification</keyword>
<keyword id="KW-1185">Reference proteome</keyword>
<keyword id="KW-0697">Rotamase</keyword>
<evidence type="ECO:0000250" key="1">
    <source>
        <dbReference type="UniProtKB" id="P62937"/>
    </source>
</evidence>
<evidence type="ECO:0000255" key="2">
    <source>
        <dbReference type="PROSITE-ProRule" id="PRU00156"/>
    </source>
</evidence>
<evidence type="ECO:0000255" key="3">
    <source>
        <dbReference type="PROSITE-ProRule" id="PRU00498"/>
    </source>
</evidence>
<evidence type="ECO:0000305" key="4"/>
<evidence type="ECO:0000312" key="5">
    <source>
        <dbReference type="HGNC" id="HGNC:53889"/>
    </source>
</evidence>
<reference key="1">
    <citation type="journal article" date="2006" name="Nature">
        <title>The DNA sequence and biological annotation of human chromosome 1.</title>
        <authorList>
            <person name="Gregory S.G."/>
            <person name="Barlow K.F."/>
            <person name="McLay K.E."/>
            <person name="Kaul R."/>
            <person name="Swarbreck D."/>
            <person name="Dunham A."/>
            <person name="Scott C.E."/>
            <person name="Howe K.L."/>
            <person name="Woodfine K."/>
            <person name="Spencer C.C.A."/>
            <person name="Jones M.C."/>
            <person name="Gillson C."/>
            <person name="Searle S."/>
            <person name="Zhou Y."/>
            <person name="Kokocinski F."/>
            <person name="McDonald L."/>
            <person name="Evans R."/>
            <person name="Phillips K."/>
            <person name="Atkinson A."/>
            <person name="Cooper R."/>
            <person name="Jones C."/>
            <person name="Hall R.E."/>
            <person name="Andrews T.D."/>
            <person name="Lloyd C."/>
            <person name="Ainscough R."/>
            <person name="Almeida J.P."/>
            <person name="Ambrose K.D."/>
            <person name="Anderson F."/>
            <person name="Andrew R.W."/>
            <person name="Ashwell R.I.S."/>
            <person name="Aubin K."/>
            <person name="Babbage A.K."/>
            <person name="Bagguley C.L."/>
            <person name="Bailey J."/>
            <person name="Beasley H."/>
            <person name="Bethel G."/>
            <person name="Bird C.P."/>
            <person name="Bray-Allen S."/>
            <person name="Brown J.Y."/>
            <person name="Brown A.J."/>
            <person name="Buckley D."/>
            <person name="Burton J."/>
            <person name="Bye J."/>
            <person name="Carder C."/>
            <person name="Chapman J.C."/>
            <person name="Clark S.Y."/>
            <person name="Clarke G."/>
            <person name="Clee C."/>
            <person name="Cobley V."/>
            <person name="Collier R.E."/>
            <person name="Corby N."/>
            <person name="Coville G.J."/>
            <person name="Davies J."/>
            <person name="Deadman R."/>
            <person name="Dunn M."/>
            <person name="Earthrowl M."/>
            <person name="Ellington A.G."/>
            <person name="Errington H."/>
            <person name="Frankish A."/>
            <person name="Frankland J."/>
            <person name="French L."/>
            <person name="Garner P."/>
            <person name="Garnett J."/>
            <person name="Gay L."/>
            <person name="Ghori M.R.J."/>
            <person name="Gibson R."/>
            <person name="Gilby L.M."/>
            <person name="Gillett W."/>
            <person name="Glithero R.J."/>
            <person name="Grafham D.V."/>
            <person name="Griffiths C."/>
            <person name="Griffiths-Jones S."/>
            <person name="Grocock R."/>
            <person name="Hammond S."/>
            <person name="Harrison E.S.I."/>
            <person name="Hart E."/>
            <person name="Haugen E."/>
            <person name="Heath P.D."/>
            <person name="Holmes S."/>
            <person name="Holt K."/>
            <person name="Howden P.J."/>
            <person name="Hunt A.R."/>
            <person name="Hunt S.E."/>
            <person name="Hunter G."/>
            <person name="Isherwood J."/>
            <person name="James R."/>
            <person name="Johnson C."/>
            <person name="Johnson D."/>
            <person name="Joy A."/>
            <person name="Kay M."/>
            <person name="Kershaw J.K."/>
            <person name="Kibukawa M."/>
            <person name="Kimberley A.M."/>
            <person name="King A."/>
            <person name="Knights A.J."/>
            <person name="Lad H."/>
            <person name="Laird G."/>
            <person name="Lawlor S."/>
            <person name="Leongamornlert D.A."/>
            <person name="Lloyd D.M."/>
            <person name="Loveland J."/>
            <person name="Lovell J."/>
            <person name="Lush M.J."/>
            <person name="Lyne R."/>
            <person name="Martin S."/>
            <person name="Mashreghi-Mohammadi M."/>
            <person name="Matthews L."/>
            <person name="Matthews N.S.W."/>
            <person name="McLaren S."/>
            <person name="Milne S."/>
            <person name="Mistry S."/>
            <person name="Moore M.J.F."/>
            <person name="Nickerson T."/>
            <person name="O'Dell C.N."/>
            <person name="Oliver K."/>
            <person name="Palmeiri A."/>
            <person name="Palmer S.A."/>
            <person name="Parker A."/>
            <person name="Patel D."/>
            <person name="Pearce A.V."/>
            <person name="Peck A.I."/>
            <person name="Pelan S."/>
            <person name="Phelps K."/>
            <person name="Phillimore B.J."/>
            <person name="Plumb R."/>
            <person name="Rajan J."/>
            <person name="Raymond C."/>
            <person name="Rouse G."/>
            <person name="Saenphimmachak C."/>
            <person name="Sehra H.K."/>
            <person name="Sheridan E."/>
            <person name="Shownkeen R."/>
            <person name="Sims S."/>
            <person name="Skuce C.D."/>
            <person name="Smith M."/>
            <person name="Steward C."/>
            <person name="Subramanian S."/>
            <person name="Sycamore N."/>
            <person name="Tracey A."/>
            <person name="Tromans A."/>
            <person name="Van Helmond Z."/>
            <person name="Wall M."/>
            <person name="Wallis J.M."/>
            <person name="White S."/>
            <person name="Whitehead S.L."/>
            <person name="Wilkinson J.E."/>
            <person name="Willey D.L."/>
            <person name="Williams H."/>
            <person name="Wilming L."/>
            <person name="Wray P.W."/>
            <person name="Wu Z."/>
            <person name="Coulson A."/>
            <person name="Vaudin M."/>
            <person name="Sulston J.E."/>
            <person name="Durbin R.M."/>
            <person name="Hubbard T."/>
            <person name="Wooster R."/>
            <person name="Dunham I."/>
            <person name="Carter N.P."/>
            <person name="McVean G."/>
            <person name="Ross M.T."/>
            <person name="Harrow J."/>
            <person name="Olson M.V."/>
            <person name="Beck S."/>
            <person name="Rogers J."/>
            <person name="Bentley D.R."/>
        </authorList>
    </citation>
    <scope>NUCLEOTIDE SEQUENCE [LARGE SCALE GENOMIC DNA]</scope>
</reference>
<dbReference type="EC" id="5.2.1.8" evidence="1"/>
<dbReference type="EMBL" id="AC243756">
    <property type="status" value="NOT_ANNOTATED_CDS"/>
    <property type="molecule type" value="Genomic_DNA"/>
</dbReference>
<dbReference type="CCDS" id="CCDS91036.1"/>
<dbReference type="RefSeq" id="NP_001355057.1">
    <property type="nucleotide sequence ID" value="NM_001368128.3"/>
</dbReference>
<dbReference type="RefSeq" id="XP_011506967.1">
    <property type="nucleotide sequence ID" value="XM_011508665.2"/>
</dbReference>
<dbReference type="RefSeq" id="XP_011508569.1">
    <property type="nucleotide sequence ID" value="XM_011510267.2"/>
</dbReference>
<dbReference type="SMR" id="A0A075B767"/>
<dbReference type="FunCoup" id="A0A075B767">
    <property type="interactions" value="199"/>
</dbReference>
<dbReference type="STRING" id="9606.ENSP00000464619"/>
<dbReference type="GlyCosmos" id="A0A075B767">
    <property type="glycosylation" value="2 sites, No reported glycans"/>
</dbReference>
<dbReference type="GlyGen" id="A0A075B767">
    <property type="glycosylation" value="2 sites"/>
</dbReference>
<dbReference type="BioMuta" id="ENSG00000270339"/>
<dbReference type="jPOST" id="A0A075B767"/>
<dbReference type="MassIVE" id="A0A075B767"/>
<dbReference type="PaxDb" id="9606-ENSP00000464619"/>
<dbReference type="PeptideAtlas" id="A0A075B767"/>
<dbReference type="Antibodypedia" id="74077">
    <property type="antibodies" value="3 antibodies from 2 providers"/>
</dbReference>
<dbReference type="Ensembl" id="ENST00000584068.4">
    <property type="protein sequence ID" value="ENSP00000464619.2"/>
    <property type="gene ID" value="ENSG00000270339.4"/>
</dbReference>
<dbReference type="GeneID" id="105371242"/>
<dbReference type="MANE-Select" id="ENST00000584068.4">
    <property type="protein sequence ID" value="ENSP00000464619.2"/>
    <property type="RefSeq nucleotide sequence ID" value="NM_001368128.3"/>
    <property type="RefSeq protein sequence ID" value="NP_001355057.1"/>
</dbReference>
<dbReference type="UCSC" id="uc057kdh.1">
    <property type="organism name" value="human"/>
</dbReference>
<dbReference type="AGR" id="HGNC:53889"/>
<dbReference type="GeneCards" id="PPIAL4H"/>
<dbReference type="HGNC" id="HGNC:53889">
    <property type="gene designation" value="PPIAL4H"/>
</dbReference>
<dbReference type="HPA" id="ENSG00000270339">
    <property type="expression patterns" value="Tissue enhanced (brain)"/>
</dbReference>
<dbReference type="neXtProt" id="NX_A0A075B767"/>
<dbReference type="VEuPathDB" id="HostDB:ENSG00000270339"/>
<dbReference type="eggNOG" id="KOG0865">
    <property type="taxonomic scope" value="Eukaryota"/>
</dbReference>
<dbReference type="GeneTree" id="ENSGT00950000183087"/>
<dbReference type="HOGENOM" id="CLU_012062_4_3_1"/>
<dbReference type="InParanoid" id="A0A075B767"/>
<dbReference type="OrthoDB" id="9458476at2759"/>
<dbReference type="PAN-GO" id="A0A075B767">
    <property type="GO annotations" value="6 GO annotations based on evolutionary models"/>
</dbReference>
<dbReference type="PhylomeDB" id="A0A075B767"/>
<dbReference type="BioGRID-ORCS" id="105371242">
    <property type="hits" value="2 hits in 3 CRISPR screens"/>
</dbReference>
<dbReference type="Pharos" id="A0A075B767">
    <property type="development level" value="Tdark"/>
</dbReference>
<dbReference type="PRO" id="PR:A0A075B767"/>
<dbReference type="Proteomes" id="UP000005640">
    <property type="component" value="Chromosome 1"/>
</dbReference>
<dbReference type="RNAct" id="A0A075B767">
    <property type="molecule type" value="protein"/>
</dbReference>
<dbReference type="Bgee" id="ENSG00000270339">
    <property type="expression patterns" value="Expressed in granulocyte and 58 other cell types or tissues"/>
</dbReference>
<dbReference type="GO" id="GO:0005737">
    <property type="term" value="C:cytoplasm"/>
    <property type="evidence" value="ECO:0000318"/>
    <property type="project" value="GO_Central"/>
</dbReference>
<dbReference type="GO" id="GO:0016018">
    <property type="term" value="F:cyclosporin A binding"/>
    <property type="evidence" value="ECO:0000318"/>
    <property type="project" value="GO_Central"/>
</dbReference>
<dbReference type="GO" id="GO:0003755">
    <property type="term" value="F:peptidyl-prolyl cis-trans isomerase activity"/>
    <property type="evidence" value="ECO:0000318"/>
    <property type="project" value="GO_Central"/>
</dbReference>
<dbReference type="GO" id="GO:0006457">
    <property type="term" value="P:protein folding"/>
    <property type="evidence" value="ECO:0000318"/>
    <property type="project" value="GO_Central"/>
</dbReference>
<dbReference type="FunFam" id="2.40.100.10:FF:000011">
    <property type="entry name" value="Peptidyl-prolyl cis-trans isomerase A"/>
    <property type="match status" value="1"/>
</dbReference>
<dbReference type="Gene3D" id="2.40.100.10">
    <property type="entry name" value="Cyclophilin-like"/>
    <property type="match status" value="1"/>
</dbReference>
<dbReference type="InterPro" id="IPR029000">
    <property type="entry name" value="Cyclophilin-like_dom_sf"/>
</dbReference>
<dbReference type="InterPro" id="IPR024936">
    <property type="entry name" value="Cyclophilin-type_PPIase"/>
</dbReference>
<dbReference type="InterPro" id="IPR020892">
    <property type="entry name" value="Cyclophilin-type_PPIase_CS"/>
</dbReference>
<dbReference type="InterPro" id="IPR002130">
    <property type="entry name" value="Cyclophilin-type_PPIase_dom"/>
</dbReference>
<dbReference type="PANTHER" id="PTHR11071">
    <property type="entry name" value="PEPTIDYL-PROLYL CIS-TRANS ISOMERASE"/>
    <property type="match status" value="1"/>
</dbReference>
<dbReference type="PANTHER" id="PTHR11071:SF466">
    <property type="entry name" value="PEPTIDYL-PROLYL CIS-TRANS ISOMERASE A-LIKE 4C-RELATED"/>
    <property type="match status" value="1"/>
</dbReference>
<dbReference type="Pfam" id="PF00160">
    <property type="entry name" value="Pro_isomerase"/>
    <property type="match status" value="1"/>
</dbReference>
<dbReference type="PIRSF" id="PIRSF001467">
    <property type="entry name" value="Peptidylpro_ismrse"/>
    <property type="match status" value="1"/>
</dbReference>
<dbReference type="PRINTS" id="PR00153">
    <property type="entry name" value="CSAPPISMRASE"/>
</dbReference>
<dbReference type="SUPFAM" id="SSF50891">
    <property type="entry name" value="Cyclophilin-like"/>
    <property type="match status" value="1"/>
</dbReference>
<dbReference type="PROSITE" id="PS00170">
    <property type="entry name" value="CSA_PPIASE_1"/>
    <property type="match status" value="1"/>
</dbReference>
<dbReference type="PROSITE" id="PS50072">
    <property type="entry name" value="CSA_PPIASE_2"/>
    <property type="match status" value="1"/>
</dbReference>
<protein>
    <recommendedName>
        <fullName evidence="4">Peptidyl-prolyl cis-trans isomerase A-like 4H</fullName>
        <shortName>PPIase A-like 4H</shortName>
        <ecNumber evidence="1">5.2.1.8</ecNumber>
    </recommendedName>
</protein>